<protein>
    <recommendedName>
        <fullName>SHC SH2 domain-binding protein 1</fullName>
    </recommendedName>
</protein>
<comment type="function">
    <text evidence="1">May play a role in signaling pathways governing cellular proliferation, cell growth and differentiation. May be a component of a novel signaling pathway downstream of Shc. Acts as a positive regulator of FGF signaling in neural progenitor cells.</text>
</comment>
<comment type="subunit">
    <text evidence="1 4">Interacts directly with isoform p52shc of SHC1 via its SH2 domain (By similarity). Interacts with TRIM71; leading to enhanced SHCBP1 protein stability (By similarity). Interacts with both members of the centralspindlin complex, KIF23 and RACGAP1 (PubMed:21187330).</text>
</comment>
<comment type="interaction">
    <interactant intactId="EBI-744700">
        <id>Q8NEM2</id>
    </interactant>
    <interactant intactId="EBI-706216">
        <id>P05771</id>
        <label>PRKCB</label>
    </interactant>
    <organismsDiffer>false</organismsDiffer>
    <experiments>3</experiments>
</comment>
<comment type="subcellular location">
    <subcellularLocation>
        <location evidence="4">Midbody</location>
    </subcellularLocation>
    <subcellularLocation>
        <location evidence="4">Cytoplasm</location>
        <location evidence="4">Cytoskeleton</location>
        <location evidence="4">Spindle</location>
    </subcellularLocation>
    <text evidence="4">Displays weak localization to the spindle midzone in some early telophase cells and is concentrated at the midbody in late cytokinesis.</text>
</comment>
<comment type="sequence caution" evidence="5">
    <conflict type="erroneous initiation">
        <sequence resource="EMBL-CDS" id="BAB15208"/>
    </conflict>
    <text>Truncated N-terminus.</text>
</comment>
<keyword id="KW-0007">Acetylation</keyword>
<keyword id="KW-0963">Cytoplasm</keyword>
<keyword id="KW-0206">Cytoskeleton</keyword>
<keyword id="KW-0597">Phosphoprotein</keyword>
<keyword id="KW-1267">Proteomics identification</keyword>
<keyword id="KW-1185">Reference proteome</keyword>
<keyword id="KW-0677">Repeat</keyword>
<gene>
    <name type="primary">SHCBP1</name>
</gene>
<accession>Q8NEM2</accession>
<accession>Q96N60</accession>
<accession>Q9BVS0</accession>
<accession>Q9H6P6</accession>
<reference key="1">
    <citation type="journal article" date="2004" name="Nat. Genet.">
        <title>Complete sequencing and characterization of 21,243 full-length human cDNAs.</title>
        <authorList>
            <person name="Ota T."/>
            <person name="Suzuki Y."/>
            <person name="Nishikawa T."/>
            <person name="Otsuki T."/>
            <person name="Sugiyama T."/>
            <person name="Irie R."/>
            <person name="Wakamatsu A."/>
            <person name="Hayashi K."/>
            <person name="Sato H."/>
            <person name="Nagai K."/>
            <person name="Kimura K."/>
            <person name="Makita H."/>
            <person name="Sekine M."/>
            <person name="Obayashi M."/>
            <person name="Nishi T."/>
            <person name="Shibahara T."/>
            <person name="Tanaka T."/>
            <person name="Ishii S."/>
            <person name="Yamamoto J."/>
            <person name="Saito K."/>
            <person name="Kawai Y."/>
            <person name="Isono Y."/>
            <person name="Nakamura Y."/>
            <person name="Nagahari K."/>
            <person name="Murakami K."/>
            <person name="Yasuda T."/>
            <person name="Iwayanagi T."/>
            <person name="Wagatsuma M."/>
            <person name="Shiratori A."/>
            <person name="Sudo H."/>
            <person name="Hosoiri T."/>
            <person name="Kaku Y."/>
            <person name="Kodaira H."/>
            <person name="Kondo H."/>
            <person name="Sugawara M."/>
            <person name="Takahashi M."/>
            <person name="Kanda K."/>
            <person name="Yokoi T."/>
            <person name="Furuya T."/>
            <person name="Kikkawa E."/>
            <person name="Omura Y."/>
            <person name="Abe K."/>
            <person name="Kamihara K."/>
            <person name="Katsuta N."/>
            <person name="Sato K."/>
            <person name="Tanikawa M."/>
            <person name="Yamazaki M."/>
            <person name="Ninomiya K."/>
            <person name="Ishibashi T."/>
            <person name="Yamashita H."/>
            <person name="Murakawa K."/>
            <person name="Fujimori K."/>
            <person name="Tanai H."/>
            <person name="Kimata M."/>
            <person name="Watanabe M."/>
            <person name="Hiraoka S."/>
            <person name="Chiba Y."/>
            <person name="Ishida S."/>
            <person name="Ono Y."/>
            <person name="Takiguchi S."/>
            <person name="Watanabe S."/>
            <person name="Yosida M."/>
            <person name="Hotuta T."/>
            <person name="Kusano J."/>
            <person name="Kanehori K."/>
            <person name="Takahashi-Fujii A."/>
            <person name="Hara H."/>
            <person name="Tanase T.-O."/>
            <person name="Nomura Y."/>
            <person name="Togiya S."/>
            <person name="Komai F."/>
            <person name="Hara R."/>
            <person name="Takeuchi K."/>
            <person name="Arita M."/>
            <person name="Imose N."/>
            <person name="Musashino K."/>
            <person name="Yuuki H."/>
            <person name="Oshima A."/>
            <person name="Sasaki N."/>
            <person name="Aotsuka S."/>
            <person name="Yoshikawa Y."/>
            <person name="Matsunawa H."/>
            <person name="Ichihara T."/>
            <person name="Shiohata N."/>
            <person name="Sano S."/>
            <person name="Moriya S."/>
            <person name="Momiyama H."/>
            <person name="Satoh N."/>
            <person name="Takami S."/>
            <person name="Terashima Y."/>
            <person name="Suzuki O."/>
            <person name="Nakagawa S."/>
            <person name="Senoh A."/>
            <person name="Mizoguchi H."/>
            <person name="Goto Y."/>
            <person name="Shimizu F."/>
            <person name="Wakebe H."/>
            <person name="Hishigaki H."/>
            <person name="Watanabe T."/>
            <person name="Sugiyama A."/>
            <person name="Takemoto M."/>
            <person name="Kawakami B."/>
            <person name="Yamazaki M."/>
            <person name="Watanabe K."/>
            <person name="Kumagai A."/>
            <person name="Itakura S."/>
            <person name="Fukuzumi Y."/>
            <person name="Fujimori Y."/>
            <person name="Komiyama M."/>
            <person name="Tashiro H."/>
            <person name="Tanigami A."/>
            <person name="Fujiwara T."/>
            <person name="Ono T."/>
            <person name="Yamada K."/>
            <person name="Fujii Y."/>
            <person name="Ozaki K."/>
            <person name="Hirao M."/>
            <person name="Ohmori Y."/>
            <person name="Kawabata A."/>
            <person name="Hikiji T."/>
            <person name="Kobatake N."/>
            <person name="Inagaki H."/>
            <person name="Ikema Y."/>
            <person name="Okamoto S."/>
            <person name="Okitani R."/>
            <person name="Kawakami T."/>
            <person name="Noguchi S."/>
            <person name="Itoh T."/>
            <person name="Shigeta K."/>
            <person name="Senba T."/>
            <person name="Matsumura K."/>
            <person name="Nakajima Y."/>
            <person name="Mizuno T."/>
            <person name="Morinaga M."/>
            <person name="Sasaki M."/>
            <person name="Togashi T."/>
            <person name="Oyama M."/>
            <person name="Hata H."/>
            <person name="Watanabe M."/>
            <person name="Komatsu T."/>
            <person name="Mizushima-Sugano J."/>
            <person name="Satoh T."/>
            <person name="Shirai Y."/>
            <person name="Takahashi Y."/>
            <person name="Nakagawa K."/>
            <person name="Okumura K."/>
            <person name="Nagase T."/>
            <person name="Nomura N."/>
            <person name="Kikuchi H."/>
            <person name="Masuho Y."/>
            <person name="Yamashita R."/>
            <person name="Nakai K."/>
            <person name="Yada T."/>
            <person name="Nakamura Y."/>
            <person name="Ohara O."/>
            <person name="Isogai T."/>
            <person name="Sugano S."/>
        </authorList>
    </citation>
    <scope>NUCLEOTIDE SEQUENCE [LARGE SCALE MRNA]</scope>
    <scope>VARIANT THR-21</scope>
</reference>
<reference key="2">
    <citation type="journal article" date="2004" name="Nature">
        <title>The sequence and analysis of duplication-rich human chromosome 16.</title>
        <authorList>
            <person name="Martin J."/>
            <person name="Han C."/>
            <person name="Gordon L.A."/>
            <person name="Terry A."/>
            <person name="Prabhakar S."/>
            <person name="She X."/>
            <person name="Xie G."/>
            <person name="Hellsten U."/>
            <person name="Chan Y.M."/>
            <person name="Altherr M."/>
            <person name="Couronne O."/>
            <person name="Aerts A."/>
            <person name="Bajorek E."/>
            <person name="Black S."/>
            <person name="Blumer H."/>
            <person name="Branscomb E."/>
            <person name="Brown N.C."/>
            <person name="Bruno W.J."/>
            <person name="Buckingham J.M."/>
            <person name="Callen D.F."/>
            <person name="Campbell C.S."/>
            <person name="Campbell M.L."/>
            <person name="Campbell E.W."/>
            <person name="Caoile C."/>
            <person name="Challacombe J.F."/>
            <person name="Chasteen L.A."/>
            <person name="Chertkov O."/>
            <person name="Chi H.C."/>
            <person name="Christensen M."/>
            <person name="Clark L.M."/>
            <person name="Cohn J.D."/>
            <person name="Denys M."/>
            <person name="Detter J.C."/>
            <person name="Dickson M."/>
            <person name="Dimitrijevic-Bussod M."/>
            <person name="Escobar J."/>
            <person name="Fawcett J.J."/>
            <person name="Flowers D."/>
            <person name="Fotopulos D."/>
            <person name="Glavina T."/>
            <person name="Gomez M."/>
            <person name="Gonzales E."/>
            <person name="Goodstein D."/>
            <person name="Goodwin L.A."/>
            <person name="Grady D.L."/>
            <person name="Grigoriev I."/>
            <person name="Groza M."/>
            <person name="Hammon N."/>
            <person name="Hawkins T."/>
            <person name="Haydu L."/>
            <person name="Hildebrand C.E."/>
            <person name="Huang W."/>
            <person name="Israni S."/>
            <person name="Jett J."/>
            <person name="Jewett P.B."/>
            <person name="Kadner K."/>
            <person name="Kimball H."/>
            <person name="Kobayashi A."/>
            <person name="Krawczyk M.-C."/>
            <person name="Leyba T."/>
            <person name="Longmire J.L."/>
            <person name="Lopez F."/>
            <person name="Lou Y."/>
            <person name="Lowry S."/>
            <person name="Ludeman T."/>
            <person name="Manohar C.F."/>
            <person name="Mark G.A."/>
            <person name="McMurray K.L."/>
            <person name="Meincke L.J."/>
            <person name="Morgan J."/>
            <person name="Moyzis R.K."/>
            <person name="Mundt M.O."/>
            <person name="Munk A.C."/>
            <person name="Nandkeshwar R.D."/>
            <person name="Pitluck S."/>
            <person name="Pollard M."/>
            <person name="Predki P."/>
            <person name="Parson-Quintana B."/>
            <person name="Ramirez L."/>
            <person name="Rash S."/>
            <person name="Retterer J."/>
            <person name="Ricke D.O."/>
            <person name="Robinson D.L."/>
            <person name="Rodriguez A."/>
            <person name="Salamov A."/>
            <person name="Saunders E.H."/>
            <person name="Scott D."/>
            <person name="Shough T."/>
            <person name="Stallings R.L."/>
            <person name="Stalvey M."/>
            <person name="Sutherland R.D."/>
            <person name="Tapia R."/>
            <person name="Tesmer J.G."/>
            <person name="Thayer N."/>
            <person name="Thompson L.S."/>
            <person name="Tice H."/>
            <person name="Torney D.C."/>
            <person name="Tran-Gyamfi M."/>
            <person name="Tsai M."/>
            <person name="Ulanovsky L.E."/>
            <person name="Ustaszewska A."/>
            <person name="Vo N."/>
            <person name="White P.S."/>
            <person name="Williams A.L."/>
            <person name="Wills P.L."/>
            <person name="Wu J.-R."/>
            <person name="Wu K."/>
            <person name="Yang J."/>
            <person name="DeJong P."/>
            <person name="Bruce D."/>
            <person name="Doggett N.A."/>
            <person name="Deaven L."/>
            <person name="Schmutz J."/>
            <person name="Grimwood J."/>
            <person name="Richardson P."/>
            <person name="Rokhsar D.S."/>
            <person name="Eichler E.E."/>
            <person name="Gilna P."/>
            <person name="Lucas S.M."/>
            <person name="Myers R.M."/>
            <person name="Rubin E.M."/>
            <person name="Pennacchio L.A."/>
        </authorList>
    </citation>
    <scope>NUCLEOTIDE SEQUENCE [LARGE SCALE GENOMIC DNA]</scope>
</reference>
<reference key="3">
    <citation type="journal article" date="2004" name="Genome Res.">
        <title>The status, quality, and expansion of the NIH full-length cDNA project: the Mammalian Gene Collection (MGC).</title>
        <authorList>
            <consortium name="The MGC Project Team"/>
        </authorList>
    </citation>
    <scope>NUCLEOTIDE SEQUENCE [LARGE SCALE MRNA]</scope>
    <scope>VARIANT THR-21</scope>
    <source>
        <tissue>Placenta</tissue>
        <tissue>Testis</tissue>
    </source>
</reference>
<reference key="4">
    <citation type="journal article" date="2006" name="Nat. Biotechnol.">
        <title>A probability-based approach for high-throughput protein phosphorylation analysis and site localization.</title>
        <authorList>
            <person name="Beausoleil S.A."/>
            <person name="Villen J."/>
            <person name="Gerber S.A."/>
            <person name="Rush J."/>
            <person name="Gygi S.P."/>
        </authorList>
    </citation>
    <scope>PHOSPHORYLATION [LARGE SCALE ANALYSIS] AT SER-31</scope>
    <scope>VARIANT [LARGE SCALE ANALYSIS] THR-21</scope>
    <scope>IDENTIFICATION BY MASS SPECTROMETRY [LARGE SCALE ANALYSIS]</scope>
    <source>
        <tissue>Cervix carcinoma</tissue>
    </source>
</reference>
<reference key="5">
    <citation type="journal article" date="2008" name="Proc. Natl. Acad. Sci. U.S.A.">
        <title>A quantitative atlas of mitotic phosphorylation.</title>
        <authorList>
            <person name="Dephoure N."/>
            <person name="Zhou C."/>
            <person name="Villen J."/>
            <person name="Beausoleil S.A."/>
            <person name="Bakalarski C.E."/>
            <person name="Elledge S.J."/>
            <person name="Gygi S.P."/>
        </authorList>
    </citation>
    <scope>PHOSPHORYLATION [LARGE SCALE ANALYSIS] AT SER-31; SER-42; SER-44; SER-47; SER-273 AND SER-634</scope>
    <scope>VARIANT [LARGE SCALE ANALYSIS] THR-21</scope>
    <scope>IDENTIFICATION BY MASS SPECTROMETRY [LARGE SCALE ANALYSIS]</scope>
    <source>
        <tissue>Cervix carcinoma</tissue>
    </source>
</reference>
<reference key="6">
    <citation type="journal article" date="2009" name="Anal. Chem.">
        <title>Lys-N and trypsin cover complementary parts of the phosphoproteome in a refined SCX-based approach.</title>
        <authorList>
            <person name="Gauci S."/>
            <person name="Helbig A.O."/>
            <person name="Slijper M."/>
            <person name="Krijgsveld J."/>
            <person name="Heck A.J."/>
            <person name="Mohammed S."/>
        </authorList>
    </citation>
    <scope>IDENTIFICATION BY MASS SPECTROMETRY [LARGE SCALE ANALYSIS]</scope>
</reference>
<reference key="7">
    <citation type="journal article" date="2009" name="Sci. Signal.">
        <title>Quantitative phosphoproteomic analysis of T cell receptor signaling reveals system-wide modulation of protein-protein interactions.</title>
        <authorList>
            <person name="Mayya V."/>
            <person name="Lundgren D.H."/>
            <person name="Hwang S.-I."/>
            <person name="Rezaul K."/>
            <person name="Wu L."/>
            <person name="Eng J.K."/>
            <person name="Rodionov V."/>
            <person name="Han D.K."/>
        </authorList>
    </citation>
    <scope>PHOSPHORYLATION [LARGE SCALE ANALYSIS] AT SER-634</scope>
    <scope>IDENTIFICATION BY MASS SPECTROMETRY [LARGE SCALE ANALYSIS]</scope>
    <source>
        <tissue>Leukemic T-cell</tissue>
    </source>
</reference>
<reference key="8">
    <citation type="journal article" date="2010" name="J. Cell Biol.">
        <title>Nessun Dorma, a novel centralspindlin partner, is required for cytokinesis in Drosophila spermatocytes.</title>
        <authorList>
            <person name="Montembault E."/>
            <person name="Zhang W."/>
            <person name="Przewloka M.R."/>
            <person name="Archambault V."/>
            <person name="Sevin E.W."/>
            <person name="Laue E.D."/>
            <person name="Glover D.M."/>
            <person name="D'Avino P.P."/>
        </authorList>
    </citation>
    <scope>INTERACTION WITH KIF23 AND RACGAP1</scope>
    <scope>SUBCELLULAR LOCATION</scope>
</reference>
<reference key="9">
    <citation type="journal article" date="2010" name="Sci. Signal.">
        <title>Quantitative phosphoproteomics reveals widespread full phosphorylation site occupancy during mitosis.</title>
        <authorList>
            <person name="Olsen J.V."/>
            <person name="Vermeulen M."/>
            <person name="Santamaria A."/>
            <person name="Kumar C."/>
            <person name="Miller M.L."/>
            <person name="Jensen L.J."/>
            <person name="Gnad F."/>
            <person name="Cox J."/>
            <person name="Jensen T.S."/>
            <person name="Nigg E.A."/>
            <person name="Brunak S."/>
            <person name="Mann M."/>
        </authorList>
    </citation>
    <scope>ACETYLATION [LARGE SCALE ANALYSIS] AT ALA-2</scope>
    <scope>PHOSPHORYLATION [LARGE SCALE ANALYSIS] AT SER-5; THR-7; SER-31 AND SER-634</scope>
    <scope>VARIANT [LARGE SCALE ANALYSIS] THR-21</scope>
    <scope>CLEAVAGE OF INITIATOR METHIONINE [LARGE SCALE ANALYSIS]</scope>
    <scope>IDENTIFICATION BY MASS SPECTROMETRY [LARGE SCALE ANALYSIS]</scope>
    <source>
        <tissue>Cervix carcinoma</tissue>
    </source>
</reference>
<reference key="10">
    <citation type="journal article" date="2011" name="BMC Syst. Biol.">
        <title>Initial characterization of the human central proteome.</title>
        <authorList>
            <person name="Burkard T.R."/>
            <person name="Planyavsky M."/>
            <person name="Kaupe I."/>
            <person name="Breitwieser F.P."/>
            <person name="Buerckstuemmer T."/>
            <person name="Bennett K.L."/>
            <person name="Superti-Furga G."/>
            <person name="Colinge J."/>
        </authorList>
    </citation>
    <scope>IDENTIFICATION BY MASS SPECTROMETRY [LARGE SCALE ANALYSIS]</scope>
</reference>
<reference key="11">
    <citation type="journal article" date="2012" name="Mol. Cell. Proteomics">
        <title>Comparative large-scale characterisation of plant vs. mammal proteins reveals similar and idiosyncratic N-alpha acetylation features.</title>
        <authorList>
            <person name="Bienvenut W.V."/>
            <person name="Sumpton D."/>
            <person name="Martinez A."/>
            <person name="Lilla S."/>
            <person name="Espagne C."/>
            <person name="Meinnel T."/>
            <person name="Giglione C."/>
        </authorList>
    </citation>
    <scope>ACETYLATION [LARGE SCALE ANALYSIS] AT ALA-2</scope>
    <scope>CLEAVAGE OF INITIATOR METHIONINE [LARGE SCALE ANALYSIS]</scope>
    <scope>IDENTIFICATION BY MASS SPECTROMETRY [LARGE SCALE ANALYSIS]</scope>
</reference>
<reference key="12">
    <citation type="journal article" date="2012" name="Proc. Natl. Acad. Sci. U.S.A.">
        <title>N-terminal acetylome analyses and functional insights of the N-terminal acetyltransferase NatB.</title>
        <authorList>
            <person name="Van Damme P."/>
            <person name="Lasa M."/>
            <person name="Polevoda B."/>
            <person name="Gazquez C."/>
            <person name="Elosegui-Artola A."/>
            <person name="Kim D.S."/>
            <person name="De Juan-Pardo E."/>
            <person name="Demeyer K."/>
            <person name="Hole K."/>
            <person name="Larrea E."/>
            <person name="Timmerman E."/>
            <person name="Prieto J."/>
            <person name="Arnesen T."/>
            <person name="Sherman F."/>
            <person name="Gevaert K."/>
            <person name="Aldabe R."/>
        </authorList>
    </citation>
    <scope>ACETYLATION [LARGE SCALE ANALYSIS] AT ALA-2</scope>
    <scope>CLEAVAGE OF INITIATOR METHIONINE [LARGE SCALE ANALYSIS]</scope>
    <scope>IDENTIFICATION BY MASS SPECTROMETRY [LARGE SCALE ANALYSIS]</scope>
</reference>
<reference key="13">
    <citation type="journal article" date="2013" name="J. Proteome Res.">
        <title>Toward a comprehensive characterization of a human cancer cell phosphoproteome.</title>
        <authorList>
            <person name="Zhou H."/>
            <person name="Di Palma S."/>
            <person name="Preisinger C."/>
            <person name="Peng M."/>
            <person name="Polat A.N."/>
            <person name="Heck A.J."/>
            <person name="Mohammed S."/>
        </authorList>
    </citation>
    <scope>PHOSPHORYLATION [LARGE SCALE ANALYSIS] AT SER-5; SER-31 AND SER-42</scope>
    <scope>VARIANT [LARGE SCALE ANALYSIS] THR-21</scope>
    <scope>IDENTIFICATION BY MASS SPECTROMETRY [LARGE SCALE ANALYSIS]</scope>
    <source>
        <tissue>Cervix carcinoma</tissue>
        <tissue>Erythroleukemia</tissue>
    </source>
</reference>
<organism>
    <name type="scientific">Homo sapiens</name>
    <name type="common">Human</name>
    <dbReference type="NCBI Taxonomy" id="9606"/>
    <lineage>
        <taxon>Eukaryota</taxon>
        <taxon>Metazoa</taxon>
        <taxon>Chordata</taxon>
        <taxon>Craniata</taxon>
        <taxon>Vertebrata</taxon>
        <taxon>Euteleostomi</taxon>
        <taxon>Mammalia</taxon>
        <taxon>Eutheria</taxon>
        <taxon>Euarchontoglires</taxon>
        <taxon>Primates</taxon>
        <taxon>Haplorrhini</taxon>
        <taxon>Catarrhini</taxon>
        <taxon>Hominidae</taxon>
        <taxon>Homo</taxon>
    </lineage>
</organism>
<dbReference type="EMBL" id="AK025662">
    <property type="protein sequence ID" value="BAB15208.1"/>
    <property type="status" value="ALT_INIT"/>
    <property type="molecule type" value="mRNA"/>
</dbReference>
<dbReference type="EMBL" id="AK055931">
    <property type="protein sequence ID" value="BAB71049.1"/>
    <property type="molecule type" value="mRNA"/>
</dbReference>
<dbReference type="EMBL" id="AC092368">
    <property type="status" value="NOT_ANNOTATED_CDS"/>
    <property type="molecule type" value="Genomic_DNA"/>
</dbReference>
<dbReference type="EMBL" id="BC000960">
    <property type="protein sequence ID" value="AAH00960.1"/>
    <property type="molecule type" value="mRNA"/>
</dbReference>
<dbReference type="EMBL" id="BC030699">
    <property type="protein sequence ID" value="AAH30699.1"/>
    <property type="molecule type" value="mRNA"/>
</dbReference>
<dbReference type="CCDS" id="CCDS10720.1"/>
<dbReference type="RefSeq" id="NP_079021.3">
    <property type="nucleotide sequence ID" value="NM_024745.4"/>
</dbReference>
<dbReference type="SMR" id="Q8NEM2"/>
<dbReference type="BioGRID" id="122898">
    <property type="interactions" value="96"/>
</dbReference>
<dbReference type="CORUM" id="Q8NEM2"/>
<dbReference type="FunCoup" id="Q8NEM2">
    <property type="interactions" value="903"/>
</dbReference>
<dbReference type="IntAct" id="Q8NEM2">
    <property type="interactions" value="45"/>
</dbReference>
<dbReference type="MINT" id="Q8NEM2"/>
<dbReference type="STRING" id="9606.ENSP00000306473"/>
<dbReference type="iPTMnet" id="Q8NEM2"/>
<dbReference type="PhosphoSitePlus" id="Q8NEM2"/>
<dbReference type="BioMuta" id="SHCBP1"/>
<dbReference type="DMDM" id="296452958"/>
<dbReference type="jPOST" id="Q8NEM2"/>
<dbReference type="MassIVE" id="Q8NEM2"/>
<dbReference type="PaxDb" id="9606-ENSP00000306473"/>
<dbReference type="PeptideAtlas" id="Q8NEM2"/>
<dbReference type="ProteomicsDB" id="73181"/>
<dbReference type="Pumba" id="Q8NEM2"/>
<dbReference type="Antibodypedia" id="43856">
    <property type="antibodies" value="110 antibodies from 19 providers"/>
</dbReference>
<dbReference type="DNASU" id="79801"/>
<dbReference type="Ensembl" id="ENST00000303383.8">
    <property type="protein sequence ID" value="ENSP00000306473.3"/>
    <property type="gene ID" value="ENSG00000171241.9"/>
</dbReference>
<dbReference type="GeneID" id="79801"/>
<dbReference type="KEGG" id="hsa:79801"/>
<dbReference type="MANE-Select" id="ENST00000303383.8">
    <property type="protein sequence ID" value="ENSP00000306473.3"/>
    <property type="RefSeq nucleotide sequence ID" value="NM_024745.5"/>
    <property type="RefSeq protein sequence ID" value="NP_079021.4"/>
</dbReference>
<dbReference type="UCSC" id="uc002eec.5">
    <property type="organism name" value="human"/>
</dbReference>
<dbReference type="AGR" id="HGNC:29547"/>
<dbReference type="CTD" id="79801"/>
<dbReference type="DisGeNET" id="79801"/>
<dbReference type="GeneCards" id="SHCBP1"/>
<dbReference type="HGNC" id="HGNC:29547">
    <property type="gene designation" value="SHCBP1"/>
</dbReference>
<dbReference type="HPA" id="ENSG00000171241">
    <property type="expression patterns" value="Tissue enhanced (bone marrow, lymphoid tissue)"/>
</dbReference>
<dbReference type="MIM" id="611027">
    <property type="type" value="gene"/>
</dbReference>
<dbReference type="neXtProt" id="NX_Q8NEM2"/>
<dbReference type="OpenTargets" id="ENSG00000171241"/>
<dbReference type="PharmGKB" id="PA134931125"/>
<dbReference type="VEuPathDB" id="HostDB:ENSG00000171241"/>
<dbReference type="eggNOG" id="ENOG502QUQ2">
    <property type="taxonomic scope" value="Eukaryota"/>
</dbReference>
<dbReference type="GeneTree" id="ENSGT00940000161310"/>
<dbReference type="HOGENOM" id="CLU_022717_2_0_1"/>
<dbReference type="InParanoid" id="Q8NEM2"/>
<dbReference type="OMA" id="FLCESQD"/>
<dbReference type="OrthoDB" id="5978115at2759"/>
<dbReference type="PAN-GO" id="Q8NEM2">
    <property type="GO annotations" value="1 GO annotation based on evolutionary models"/>
</dbReference>
<dbReference type="PhylomeDB" id="Q8NEM2"/>
<dbReference type="TreeFam" id="TF329196"/>
<dbReference type="PathwayCommons" id="Q8NEM2"/>
<dbReference type="SignaLink" id="Q8NEM2"/>
<dbReference type="SIGNOR" id="Q8NEM2"/>
<dbReference type="BioGRID-ORCS" id="79801">
    <property type="hits" value="20 hits in 1160 CRISPR screens"/>
</dbReference>
<dbReference type="ChiTaRS" id="SHCBP1">
    <property type="organism name" value="human"/>
</dbReference>
<dbReference type="GeneWiki" id="SHCBP1"/>
<dbReference type="GenomeRNAi" id="79801"/>
<dbReference type="Pharos" id="Q8NEM2">
    <property type="development level" value="Tbio"/>
</dbReference>
<dbReference type="PRO" id="PR:Q8NEM2"/>
<dbReference type="Proteomes" id="UP000005640">
    <property type="component" value="Chromosome 16"/>
</dbReference>
<dbReference type="RNAct" id="Q8NEM2">
    <property type="molecule type" value="protein"/>
</dbReference>
<dbReference type="Bgee" id="ENSG00000171241">
    <property type="expression patterns" value="Expressed in secondary oocyte and 131 other cell types or tissues"/>
</dbReference>
<dbReference type="ExpressionAtlas" id="Q8NEM2">
    <property type="expression patterns" value="baseline and differential"/>
</dbReference>
<dbReference type="GO" id="GO:0005737">
    <property type="term" value="C:cytoplasm"/>
    <property type="evidence" value="ECO:0007669"/>
    <property type="project" value="UniProtKB-KW"/>
</dbReference>
<dbReference type="GO" id="GO:0030496">
    <property type="term" value="C:midbody"/>
    <property type="evidence" value="ECO:0007669"/>
    <property type="project" value="UniProtKB-SubCell"/>
</dbReference>
<dbReference type="GO" id="GO:0005819">
    <property type="term" value="C:spindle"/>
    <property type="evidence" value="ECO:0007669"/>
    <property type="project" value="UniProtKB-SubCell"/>
</dbReference>
<dbReference type="GO" id="GO:0042169">
    <property type="term" value="F:SH2 domain binding"/>
    <property type="evidence" value="ECO:0007669"/>
    <property type="project" value="Ensembl"/>
</dbReference>
<dbReference type="GO" id="GO:0008543">
    <property type="term" value="P:fibroblast growth factor receptor signaling pathway"/>
    <property type="evidence" value="ECO:0000250"/>
    <property type="project" value="UniProtKB"/>
</dbReference>
<dbReference type="GO" id="GO:2000177">
    <property type="term" value="P:regulation of neural precursor cell proliferation"/>
    <property type="evidence" value="ECO:0000250"/>
    <property type="project" value="UniProtKB"/>
</dbReference>
<dbReference type="FunFam" id="2.160.20.10:FF:000020">
    <property type="entry name" value="SHC SH2 domain-binding protein 1"/>
    <property type="match status" value="1"/>
</dbReference>
<dbReference type="Gene3D" id="2.160.20.10">
    <property type="entry name" value="Single-stranded right-handed beta-helix, Pectin lyase-like"/>
    <property type="match status" value="1"/>
</dbReference>
<dbReference type="InterPro" id="IPR039448">
    <property type="entry name" value="Beta_helix"/>
</dbReference>
<dbReference type="InterPro" id="IPR006626">
    <property type="entry name" value="PbH1"/>
</dbReference>
<dbReference type="InterPro" id="IPR012334">
    <property type="entry name" value="Pectin_lyas_fold"/>
</dbReference>
<dbReference type="InterPro" id="IPR011050">
    <property type="entry name" value="Pectin_lyase_fold/virulence"/>
</dbReference>
<dbReference type="InterPro" id="IPR045140">
    <property type="entry name" value="SHCBP1-like"/>
</dbReference>
<dbReference type="PANTHER" id="PTHR14695:SF8">
    <property type="entry name" value="SHC SH2 DOMAIN-BINDING PROTEIN 1"/>
    <property type="match status" value="1"/>
</dbReference>
<dbReference type="PANTHER" id="PTHR14695">
    <property type="entry name" value="SHC SH2-DOMAIN BINDING PROTEIN 1-RELATED"/>
    <property type="match status" value="1"/>
</dbReference>
<dbReference type="Pfam" id="PF13229">
    <property type="entry name" value="Beta_helix"/>
    <property type="match status" value="1"/>
</dbReference>
<dbReference type="Pfam" id="PF23762">
    <property type="entry name" value="SHCBP_N"/>
    <property type="match status" value="1"/>
</dbReference>
<dbReference type="SMART" id="SM00710">
    <property type="entry name" value="PbH1"/>
    <property type="match status" value="5"/>
</dbReference>
<dbReference type="SUPFAM" id="SSF51126">
    <property type="entry name" value="Pectin lyase-like"/>
    <property type="match status" value="1"/>
</dbReference>
<feature type="initiator methionine" description="Removed" evidence="9 10 11">
    <location>
        <position position="1"/>
    </location>
</feature>
<feature type="chain" id="PRO_0000076315" description="SHC SH2 domain-binding protein 1">
    <location>
        <begin position="2"/>
        <end position="672"/>
    </location>
</feature>
<feature type="repeat" description="PbH1 1">
    <location>
        <begin position="428"/>
        <end position="451"/>
    </location>
</feature>
<feature type="repeat" description="PbH1 2">
    <location>
        <begin position="452"/>
        <end position="473"/>
    </location>
</feature>
<feature type="repeat" description="PbH1 3">
    <location>
        <begin position="474"/>
        <end position="496"/>
    </location>
</feature>
<feature type="repeat" description="PbH1 4">
    <location>
        <begin position="497"/>
        <end position="518"/>
    </location>
</feature>
<feature type="repeat" description="PbH1 5">
    <location>
        <begin position="526"/>
        <end position="548"/>
    </location>
</feature>
<feature type="modified residue" description="N-acetylalanine" evidence="9 10 11">
    <location>
        <position position="2"/>
    </location>
</feature>
<feature type="modified residue" description="Phosphoserine" evidence="9 12">
    <location>
        <position position="5"/>
    </location>
</feature>
<feature type="modified residue" description="Phosphothreonine" evidence="9">
    <location>
        <position position="7"/>
    </location>
</feature>
<feature type="modified residue" description="Phosphoserine" evidence="6 7 9 12">
    <location>
        <position position="31"/>
    </location>
</feature>
<feature type="modified residue" description="Phosphoserine" evidence="7 12">
    <location>
        <position position="42"/>
    </location>
</feature>
<feature type="modified residue" description="Phosphoserine" evidence="7">
    <location>
        <position position="44"/>
    </location>
</feature>
<feature type="modified residue" description="Phosphoserine" evidence="7">
    <location>
        <position position="47"/>
    </location>
</feature>
<feature type="modified residue" description="Phosphoserine" evidence="7">
    <location>
        <position position="273"/>
    </location>
</feature>
<feature type="modified residue" description="Phosphoserine" evidence="7 8 9">
    <location>
        <position position="634"/>
    </location>
</feature>
<feature type="sequence variant" id="VAR_051354" description="In dbSNP:rs6598679." evidence="2 3 6 7 9 12">
    <original>M</original>
    <variation>T</variation>
    <location>
        <position position="21"/>
    </location>
</feature>
<feature type="sequence variant" id="VAR_051355" description="In dbSNP:rs11545690.">
    <original>M</original>
    <variation>R</variation>
    <location>
        <position position="60"/>
    </location>
</feature>
<feature type="sequence conflict" description="In Ref. 1; BAB71049." evidence="5" ref="1">
    <original>V</original>
    <variation>A</variation>
    <location>
        <position position="118"/>
    </location>
</feature>
<feature type="sequence conflict" description="In Ref. 1; BAB71049." evidence="5" ref="1">
    <original>Q</original>
    <variation>R</variation>
    <location>
        <position position="329"/>
    </location>
</feature>
<feature type="sequence conflict" description="In Ref. 1; BAB15208." evidence="5" ref="1">
    <original>K</original>
    <variation>R</variation>
    <location>
        <position position="437"/>
    </location>
</feature>
<feature type="sequence conflict" description="In Ref. 1; BAB15208." evidence="5" ref="1">
    <original>V</original>
    <variation>A</variation>
    <location>
        <position position="450"/>
    </location>
</feature>
<feature type="sequence conflict" description="In Ref. 3; AAH30699." evidence="5" ref="3">
    <original>N</original>
    <variation>S</variation>
    <location>
        <position position="558"/>
    </location>
</feature>
<proteinExistence type="evidence at protein level"/>
<name>SHCBP_HUMAN</name>
<sequence>MADGSLTGGGLEAAAMAPERMGWAVEQELASLEKGLFQDEDSCSDCSYRDKPGSSLQSFMPEGKTFFPEIFQTNQLLFYERFRAYQDYILADCKASEVQEFTAEFLEKVLEPSGWRAVWHTNVFKVLVEITDVDFAALKAVVRLAEPYLCDSQVSTFTMECMKELLDLKEHRLPLQELWVVFDDSGVFDQTALAIEHVRFFYQNIWRSWDEEEEDEYDYFVRCVEPRLRLHYDILEDRVPSGLIVDYHNLLSQCEESYRKFLNLRSSLSNCNSDSEQENISMVEGLKLYSEMEQLKQKLKLIENPLLRYVFGYQKNSNIQAKGVRSSGQKITHVVSSTMMAGLLRSLLTDRLCQEPGEEEREIQFHSDPLSAINACFEGDTVIVCPGHYVVHGTFSIADSIELEGYGLPDDIVIEKRGKGDTFVDCTGADIKISGIKFVQHDAVEGILIVHRGKTTLENCVLQCETTGVTVRTSAEFLMKNSDLYGAKGAGIEIYPGSQCTLSDNGIHHCKEGILIKDFLDEHYDIPKISMVNNIIHNNEGYGVVLVKPTIFSDLQENAEDGTEENKALKIQTSGEPDVAERVDLEELIECATGKMELCARTDPSEQVEGNCEIVNELIAASTQKGQIKKKRLSELGITQADDNLMSQEMFVGIVGNQFKWNGKGSFGTFLF</sequence>
<evidence type="ECO:0000250" key="1">
    <source>
        <dbReference type="UniProtKB" id="Q9Z179"/>
    </source>
</evidence>
<evidence type="ECO:0000269" key="2">
    <source>
    </source>
</evidence>
<evidence type="ECO:0000269" key="3">
    <source>
    </source>
</evidence>
<evidence type="ECO:0000269" key="4">
    <source>
    </source>
</evidence>
<evidence type="ECO:0000305" key="5"/>
<evidence type="ECO:0007744" key="6">
    <source>
    </source>
</evidence>
<evidence type="ECO:0007744" key="7">
    <source>
    </source>
</evidence>
<evidence type="ECO:0007744" key="8">
    <source>
    </source>
</evidence>
<evidence type="ECO:0007744" key="9">
    <source>
    </source>
</evidence>
<evidence type="ECO:0007744" key="10">
    <source>
    </source>
</evidence>
<evidence type="ECO:0007744" key="11">
    <source>
    </source>
</evidence>
<evidence type="ECO:0007744" key="12">
    <source>
    </source>
</evidence>